<proteinExistence type="inferred from homology"/>
<evidence type="ECO:0000255" key="1">
    <source>
        <dbReference type="HAMAP-Rule" id="MF_00225"/>
    </source>
</evidence>
<feature type="chain" id="PRO_1000024174" description="Dihydroorotate dehydrogenase (quinone)">
    <location>
        <begin position="1"/>
        <end position="336"/>
    </location>
</feature>
<feature type="active site" description="Nucleophile" evidence="1">
    <location>
        <position position="175"/>
    </location>
</feature>
<feature type="binding site" evidence="1">
    <location>
        <begin position="62"/>
        <end position="66"/>
    </location>
    <ligand>
        <name>FMN</name>
        <dbReference type="ChEBI" id="CHEBI:58210"/>
    </ligand>
</feature>
<feature type="binding site" evidence="1">
    <location>
        <position position="66"/>
    </location>
    <ligand>
        <name>substrate</name>
    </ligand>
</feature>
<feature type="binding site" evidence="1">
    <location>
        <position position="86"/>
    </location>
    <ligand>
        <name>FMN</name>
        <dbReference type="ChEBI" id="CHEBI:58210"/>
    </ligand>
</feature>
<feature type="binding site" evidence="1">
    <location>
        <begin position="111"/>
        <end position="115"/>
    </location>
    <ligand>
        <name>substrate</name>
    </ligand>
</feature>
<feature type="binding site" evidence="1">
    <location>
        <position position="139"/>
    </location>
    <ligand>
        <name>FMN</name>
        <dbReference type="ChEBI" id="CHEBI:58210"/>
    </ligand>
</feature>
<feature type="binding site" evidence="1">
    <location>
        <position position="172"/>
    </location>
    <ligand>
        <name>FMN</name>
        <dbReference type="ChEBI" id="CHEBI:58210"/>
    </ligand>
</feature>
<feature type="binding site" evidence="1">
    <location>
        <position position="172"/>
    </location>
    <ligand>
        <name>substrate</name>
    </ligand>
</feature>
<feature type="binding site" evidence="1">
    <location>
        <position position="177"/>
    </location>
    <ligand>
        <name>substrate</name>
    </ligand>
</feature>
<feature type="binding site" evidence="1">
    <location>
        <position position="217"/>
    </location>
    <ligand>
        <name>FMN</name>
        <dbReference type="ChEBI" id="CHEBI:58210"/>
    </ligand>
</feature>
<feature type="binding site" evidence="1">
    <location>
        <position position="245"/>
    </location>
    <ligand>
        <name>FMN</name>
        <dbReference type="ChEBI" id="CHEBI:58210"/>
    </ligand>
</feature>
<feature type="binding site" evidence="1">
    <location>
        <begin position="246"/>
        <end position="247"/>
    </location>
    <ligand>
        <name>substrate</name>
    </ligand>
</feature>
<feature type="binding site" evidence="1">
    <location>
        <position position="268"/>
    </location>
    <ligand>
        <name>FMN</name>
        <dbReference type="ChEBI" id="CHEBI:58210"/>
    </ligand>
</feature>
<feature type="binding site" evidence="1">
    <location>
        <position position="297"/>
    </location>
    <ligand>
        <name>FMN</name>
        <dbReference type="ChEBI" id="CHEBI:58210"/>
    </ligand>
</feature>
<feature type="binding site" evidence="1">
    <location>
        <begin position="318"/>
        <end position="319"/>
    </location>
    <ligand>
        <name>FMN</name>
        <dbReference type="ChEBI" id="CHEBI:58210"/>
    </ligand>
</feature>
<protein>
    <recommendedName>
        <fullName evidence="1">Dihydroorotate dehydrogenase (quinone)</fullName>
        <ecNumber evidence="1">1.3.5.2</ecNumber>
    </recommendedName>
    <alternativeName>
        <fullName evidence="1">DHOdehase</fullName>
        <shortName evidence="1">DHOD</shortName>
        <shortName evidence="1">DHODase</shortName>
    </alternativeName>
    <alternativeName>
        <fullName evidence="1">Dihydroorotate oxidase</fullName>
    </alternativeName>
</protein>
<gene>
    <name evidence="1" type="primary">pyrD</name>
    <name type="ordered locus">ESA_02402</name>
</gene>
<name>PYRD_CROS8</name>
<organism>
    <name type="scientific">Cronobacter sakazakii (strain ATCC BAA-894)</name>
    <name type="common">Enterobacter sakazakii</name>
    <dbReference type="NCBI Taxonomy" id="290339"/>
    <lineage>
        <taxon>Bacteria</taxon>
        <taxon>Pseudomonadati</taxon>
        <taxon>Pseudomonadota</taxon>
        <taxon>Gammaproteobacteria</taxon>
        <taxon>Enterobacterales</taxon>
        <taxon>Enterobacteriaceae</taxon>
        <taxon>Cronobacter</taxon>
    </lineage>
</organism>
<dbReference type="EC" id="1.3.5.2" evidence="1"/>
<dbReference type="EMBL" id="CP000783">
    <property type="protein sequence ID" value="ABU77648.1"/>
    <property type="molecule type" value="Genomic_DNA"/>
</dbReference>
<dbReference type="RefSeq" id="WP_012125193.1">
    <property type="nucleotide sequence ID" value="NC_009778.1"/>
</dbReference>
<dbReference type="SMR" id="A7MEW0"/>
<dbReference type="KEGG" id="esa:ESA_02402"/>
<dbReference type="PATRIC" id="fig|290339.8.peg.2134"/>
<dbReference type="HOGENOM" id="CLU_013640_2_0_6"/>
<dbReference type="UniPathway" id="UPA00070">
    <property type="reaction ID" value="UER00946"/>
</dbReference>
<dbReference type="Proteomes" id="UP000000260">
    <property type="component" value="Chromosome"/>
</dbReference>
<dbReference type="GO" id="GO:0005737">
    <property type="term" value="C:cytoplasm"/>
    <property type="evidence" value="ECO:0007669"/>
    <property type="project" value="InterPro"/>
</dbReference>
<dbReference type="GO" id="GO:0005886">
    <property type="term" value="C:plasma membrane"/>
    <property type="evidence" value="ECO:0007669"/>
    <property type="project" value="UniProtKB-SubCell"/>
</dbReference>
<dbReference type="GO" id="GO:0106430">
    <property type="term" value="F:dihydroorotate dehydrogenase (quinone) activity"/>
    <property type="evidence" value="ECO:0007669"/>
    <property type="project" value="UniProtKB-EC"/>
</dbReference>
<dbReference type="GO" id="GO:0006207">
    <property type="term" value="P:'de novo' pyrimidine nucleobase biosynthetic process"/>
    <property type="evidence" value="ECO:0007669"/>
    <property type="project" value="InterPro"/>
</dbReference>
<dbReference type="GO" id="GO:0044205">
    <property type="term" value="P:'de novo' UMP biosynthetic process"/>
    <property type="evidence" value="ECO:0007669"/>
    <property type="project" value="UniProtKB-UniRule"/>
</dbReference>
<dbReference type="CDD" id="cd04738">
    <property type="entry name" value="DHOD_2_like"/>
    <property type="match status" value="1"/>
</dbReference>
<dbReference type="FunFam" id="3.20.20.70:FF:000028">
    <property type="entry name" value="Dihydroorotate dehydrogenase (quinone)"/>
    <property type="match status" value="1"/>
</dbReference>
<dbReference type="Gene3D" id="3.20.20.70">
    <property type="entry name" value="Aldolase class I"/>
    <property type="match status" value="1"/>
</dbReference>
<dbReference type="HAMAP" id="MF_00225">
    <property type="entry name" value="DHO_dh_type2"/>
    <property type="match status" value="1"/>
</dbReference>
<dbReference type="InterPro" id="IPR013785">
    <property type="entry name" value="Aldolase_TIM"/>
</dbReference>
<dbReference type="InterPro" id="IPR050074">
    <property type="entry name" value="DHO_dehydrogenase"/>
</dbReference>
<dbReference type="InterPro" id="IPR012135">
    <property type="entry name" value="Dihydroorotate_DH_1_2"/>
</dbReference>
<dbReference type="InterPro" id="IPR005719">
    <property type="entry name" value="Dihydroorotate_DH_2"/>
</dbReference>
<dbReference type="InterPro" id="IPR005720">
    <property type="entry name" value="Dihydroorotate_DH_cat"/>
</dbReference>
<dbReference type="InterPro" id="IPR001295">
    <property type="entry name" value="Dihydroorotate_DH_CS"/>
</dbReference>
<dbReference type="NCBIfam" id="NF003644">
    <property type="entry name" value="PRK05286.1-1"/>
    <property type="match status" value="1"/>
</dbReference>
<dbReference type="NCBIfam" id="NF003645">
    <property type="entry name" value="PRK05286.1-2"/>
    <property type="match status" value="1"/>
</dbReference>
<dbReference type="NCBIfam" id="NF003646">
    <property type="entry name" value="PRK05286.1-4"/>
    <property type="match status" value="1"/>
</dbReference>
<dbReference type="NCBIfam" id="NF003652">
    <property type="entry name" value="PRK05286.2-5"/>
    <property type="match status" value="1"/>
</dbReference>
<dbReference type="NCBIfam" id="TIGR01036">
    <property type="entry name" value="pyrD_sub2"/>
    <property type="match status" value="1"/>
</dbReference>
<dbReference type="PANTHER" id="PTHR48109:SF4">
    <property type="entry name" value="DIHYDROOROTATE DEHYDROGENASE (QUINONE), MITOCHONDRIAL"/>
    <property type="match status" value="1"/>
</dbReference>
<dbReference type="PANTHER" id="PTHR48109">
    <property type="entry name" value="DIHYDROOROTATE DEHYDROGENASE (QUINONE), MITOCHONDRIAL-RELATED"/>
    <property type="match status" value="1"/>
</dbReference>
<dbReference type="Pfam" id="PF01180">
    <property type="entry name" value="DHO_dh"/>
    <property type="match status" value="1"/>
</dbReference>
<dbReference type="PIRSF" id="PIRSF000164">
    <property type="entry name" value="DHO_oxidase"/>
    <property type="match status" value="1"/>
</dbReference>
<dbReference type="SUPFAM" id="SSF51395">
    <property type="entry name" value="FMN-linked oxidoreductases"/>
    <property type="match status" value="1"/>
</dbReference>
<dbReference type="PROSITE" id="PS00911">
    <property type="entry name" value="DHODEHASE_1"/>
    <property type="match status" value="1"/>
</dbReference>
<dbReference type="PROSITE" id="PS00912">
    <property type="entry name" value="DHODEHASE_2"/>
    <property type="match status" value="1"/>
</dbReference>
<accession>A7MEW0</accession>
<sequence length="336" mass="36682">MYYPFVRKALFQLDPERAHEFTFQQMRRITGTPLEALLRQKVPSKPVSCMGLTFKNPLGLAAGLDKNGECIDALGALGFGSVEIGTVTPRPQPGNDKPRLFRLVEAEGLINRMGFNNLGVDNLVENVKKAHFDGVLGINIGKNKDTPVEQGKDDYLICMEKVFPYAGYIAINISSPNTPGLRSLQYGDALDDLLAAIKNQQQVLSQKHHKYVPVAVKIAPDLSLEELIQVADSLVRHNIDGVIATNTTLDRSLVQGMKYCDETGGLSGRPLQLKSTEIIRLLSQELQGRLPIIGVGGIDSVIAAREKIAAGASLIQIYSGFIFKGPPLVKEIVTHL</sequence>
<comment type="function">
    <text evidence="1">Catalyzes the conversion of dihydroorotate to orotate with quinone as electron acceptor.</text>
</comment>
<comment type="catalytic activity">
    <reaction evidence="1">
        <text>(S)-dihydroorotate + a quinone = orotate + a quinol</text>
        <dbReference type="Rhea" id="RHEA:30187"/>
        <dbReference type="ChEBI" id="CHEBI:24646"/>
        <dbReference type="ChEBI" id="CHEBI:30839"/>
        <dbReference type="ChEBI" id="CHEBI:30864"/>
        <dbReference type="ChEBI" id="CHEBI:132124"/>
        <dbReference type="EC" id="1.3.5.2"/>
    </reaction>
</comment>
<comment type="cofactor">
    <cofactor evidence="1">
        <name>FMN</name>
        <dbReference type="ChEBI" id="CHEBI:58210"/>
    </cofactor>
    <text evidence="1">Binds 1 FMN per subunit.</text>
</comment>
<comment type="pathway">
    <text evidence="1">Pyrimidine metabolism; UMP biosynthesis via de novo pathway; orotate from (S)-dihydroorotate (quinone route): step 1/1.</text>
</comment>
<comment type="subunit">
    <text evidence="1">Monomer.</text>
</comment>
<comment type="subcellular location">
    <subcellularLocation>
        <location evidence="1">Cell membrane</location>
        <topology evidence="1">Peripheral membrane protein</topology>
    </subcellularLocation>
</comment>
<comment type="similarity">
    <text evidence="1">Belongs to the dihydroorotate dehydrogenase family. Type 2 subfamily.</text>
</comment>
<reference key="1">
    <citation type="journal article" date="2010" name="PLoS ONE">
        <title>Genome sequence of Cronobacter sakazakii BAA-894 and comparative genomic hybridization analysis with other Cronobacter species.</title>
        <authorList>
            <person name="Kucerova E."/>
            <person name="Clifton S.W."/>
            <person name="Xia X.Q."/>
            <person name="Long F."/>
            <person name="Porwollik S."/>
            <person name="Fulton L."/>
            <person name="Fronick C."/>
            <person name="Minx P."/>
            <person name="Kyung K."/>
            <person name="Warren W."/>
            <person name="Fulton R."/>
            <person name="Feng D."/>
            <person name="Wollam A."/>
            <person name="Shah N."/>
            <person name="Bhonagiri V."/>
            <person name="Nash W.E."/>
            <person name="Hallsworth-Pepin K."/>
            <person name="Wilson R.K."/>
            <person name="McClelland M."/>
            <person name="Forsythe S.J."/>
        </authorList>
    </citation>
    <scope>NUCLEOTIDE SEQUENCE [LARGE SCALE GENOMIC DNA]</scope>
    <source>
        <strain>ATCC BAA-894</strain>
    </source>
</reference>
<keyword id="KW-1003">Cell membrane</keyword>
<keyword id="KW-0285">Flavoprotein</keyword>
<keyword id="KW-0288">FMN</keyword>
<keyword id="KW-0472">Membrane</keyword>
<keyword id="KW-0560">Oxidoreductase</keyword>
<keyword id="KW-0665">Pyrimidine biosynthesis</keyword>
<keyword id="KW-1185">Reference proteome</keyword>